<dbReference type="EMBL" id="BC126790">
    <property type="protein sequence ID" value="AAI26791.1"/>
    <property type="molecule type" value="mRNA"/>
</dbReference>
<dbReference type="RefSeq" id="NP_001073781.1">
    <property type="nucleotide sequence ID" value="NM_001080312.2"/>
</dbReference>
<dbReference type="RefSeq" id="XP_059738987.1">
    <property type="nucleotide sequence ID" value="XM_059883004.1"/>
</dbReference>
<dbReference type="RefSeq" id="XP_059738988.1">
    <property type="nucleotide sequence ID" value="XM_059883005.1"/>
</dbReference>
<dbReference type="FunCoup" id="A1A4P6">
    <property type="interactions" value="1479"/>
</dbReference>
<dbReference type="STRING" id="9913.ENSBTAP00000011892"/>
<dbReference type="PaxDb" id="9913-ENSBTAP00000011892"/>
<dbReference type="Ensembl" id="ENSBTAT00000094877.1">
    <property type="protein sequence ID" value="ENSBTAP00000092131.1"/>
    <property type="gene ID" value="ENSBTAG00000063314.1"/>
</dbReference>
<dbReference type="GeneID" id="613612"/>
<dbReference type="KEGG" id="bta:613612"/>
<dbReference type="CTD" id="283232"/>
<dbReference type="VEuPathDB" id="HostDB:ENSBTAG00000009032"/>
<dbReference type="eggNOG" id="KOG4502">
    <property type="taxonomic scope" value="Eukaryota"/>
</dbReference>
<dbReference type="GeneTree" id="ENSGT00940000153899"/>
<dbReference type="HOGENOM" id="CLU_135948_0_0_1"/>
<dbReference type="InParanoid" id="A1A4P6"/>
<dbReference type="OMA" id="DRNQLPK"/>
<dbReference type="OrthoDB" id="262535at2759"/>
<dbReference type="TreeFam" id="TF323824"/>
<dbReference type="Proteomes" id="UP000009136">
    <property type="component" value="Chromosome 29"/>
</dbReference>
<dbReference type="Bgee" id="ENSBTAG00000009032">
    <property type="expression patterns" value="Expressed in zone of skin and 106 other cell types or tissues"/>
</dbReference>
<dbReference type="GO" id="GO:0035869">
    <property type="term" value="C:ciliary transition zone"/>
    <property type="evidence" value="ECO:0000318"/>
    <property type="project" value="GO_Central"/>
</dbReference>
<dbReference type="GO" id="GO:0016020">
    <property type="term" value="C:membrane"/>
    <property type="evidence" value="ECO:0007669"/>
    <property type="project" value="UniProtKB-SubCell"/>
</dbReference>
<dbReference type="GO" id="GO:1905515">
    <property type="term" value="P:non-motile cilium assembly"/>
    <property type="evidence" value="ECO:0000318"/>
    <property type="project" value="GO_Central"/>
</dbReference>
<dbReference type="InterPro" id="IPR019184">
    <property type="entry name" value="Uncharacterised_TM-17"/>
</dbReference>
<dbReference type="PANTHER" id="PTHR13531">
    <property type="entry name" value="GEO07735P1-RELATED-RELATED"/>
    <property type="match status" value="1"/>
</dbReference>
<dbReference type="PANTHER" id="PTHR13531:SF8">
    <property type="entry name" value="TRANSMEMBRANE PROTEIN 80"/>
    <property type="match status" value="1"/>
</dbReference>
<dbReference type="Pfam" id="PF09799">
    <property type="entry name" value="Transmemb_17"/>
    <property type="match status" value="1"/>
</dbReference>
<protein>
    <recommendedName>
        <fullName>Transmembrane protein 80</fullName>
    </recommendedName>
</protein>
<feature type="chain" id="PRO_0000287872" description="Transmembrane protein 80">
    <location>
        <begin position="1"/>
        <end position="143"/>
    </location>
</feature>
<feature type="transmembrane region" description="Helical" evidence="2">
    <location>
        <begin position="22"/>
        <end position="42"/>
    </location>
</feature>
<feature type="transmembrane region" description="Helical" evidence="2">
    <location>
        <begin position="47"/>
        <end position="67"/>
    </location>
</feature>
<feature type="transmembrane region" description="Helical" evidence="2">
    <location>
        <begin position="88"/>
        <end position="108"/>
    </location>
</feature>
<feature type="transmembrane region" description="Helical" evidence="2">
    <location>
        <begin position="122"/>
        <end position="142"/>
    </location>
</feature>
<gene>
    <name type="primary">TMEM80</name>
</gene>
<sequence length="143" mass="15339">MAAPRRGKASSTVLSSLPLQMLLCLSGTYYALYFLATLLLLVYKSQVFTYPHSCLVLDLTLLFLMGILEAIRLYFGTTGNLMEAEVPLAASLVLTVGSALLSAYFLLWQTLVLRADSALGAPLLALHGLEAVLQVVAIAAFVS</sequence>
<name>TMM80_BOVIN</name>
<organism>
    <name type="scientific">Bos taurus</name>
    <name type="common">Bovine</name>
    <dbReference type="NCBI Taxonomy" id="9913"/>
    <lineage>
        <taxon>Eukaryota</taxon>
        <taxon>Metazoa</taxon>
        <taxon>Chordata</taxon>
        <taxon>Craniata</taxon>
        <taxon>Vertebrata</taxon>
        <taxon>Euteleostomi</taxon>
        <taxon>Mammalia</taxon>
        <taxon>Eutheria</taxon>
        <taxon>Laurasiatheria</taxon>
        <taxon>Artiodactyla</taxon>
        <taxon>Ruminantia</taxon>
        <taxon>Pecora</taxon>
        <taxon>Bovidae</taxon>
        <taxon>Bovinae</taxon>
        <taxon>Bos</taxon>
    </lineage>
</organism>
<accession>A1A4P6</accession>
<comment type="subcellular location">
    <subcellularLocation>
        <location evidence="3">Membrane</location>
        <topology evidence="3">Multi-pass membrane protein</topology>
    </subcellularLocation>
    <subcellularLocation>
        <location evidence="1">Cell projection</location>
        <location evidence="1">Cilium</location>
    </subcellularLocation>
    <text evidence="1">Localizes at the transition zone, a region between the basal body and the ciliary axoneme.</text>
</comment>
<comment type="caution">
    <text evidence="3">It is uncertain whether Met-1 or Met-21 is the initiator.</text>
</comment>
<proteinExistence type="evidence at transcript level"/>
<reference key="1">
    <citation type="submission" date="2006-10" db="EMBL/GenBank/DDBJ databases">
        <authorList>
            <consortium name="NIH - Mammalian Gene Collection (MGC) project"/>
        </authorList>
    </citation>
    <scope>NUCLEOTIDE SEQUENCE [LARGE SCALE MRNA]</scope>
    <source>
        <strain>Hereford</strain>
        <tissue>Testis</tissue>
    </source>
</reference>
<keyword id="KW-0966">Cell projection</keyword>
<keyword id="KW-0472">Membrane</keyword>
<keyword id="KW-1185">Reference proteome</keyword>
<keyword id="KW-0812">Transmembrane</keyword>
<keyword id="KW-1133">Transmembrane helix</keyword>
<evidence type="ECO:0000250" key="1">
    <source>
        <dbReference type="UniProtKB" id="Q9D3H0"/>
    </source>
</evidence>
<evidence type="ECO:0000255" key="2"/>
<evidence type="ECO:0000305" key="3"/>